<evidence type="ECO:0000255" key="1">
    <source>
        <dbReference type="HAMAP-Rule" id="MF_00384"/>
    </source>
</evidence>
<keyword id="KW-0028">Amino-acid biosynthesis</keyword>
<keyword id="KW-0067">ATP-binding</keyword>
<keyword id="KW-0963">Cytoplasm</keyword>
<keyword id="KW-0418">Kinase</keyword>
<keyword id="KW-0547">Nucleotide-binding</keyword>
<keyword id="KW-1185">Reference proteome</keyword>
<keyword id="KW-0791">Threonine biosynthesis</keyword>
<keyword id="KW-0808">Transferase</keyword>
<reference key="1">
    <citation type="journal article" date="2005" name="Genome Res.">
        <title>Living with two extremes: conclusions from the genome sequence of Natronomonas pharaonis.</title>
        <authorList>
            <person name="Falb M."/>
            <person name="Pfeiffer F."/>
            <person name="Palm P."/>
            <person name="Rodewald K."/>
            <person name="Hickmann V."/>
            <person name="Tittor J."/>
            <person name="Oesterhelt D."/>
        </authorList>
    </citation>
    <scope>NUCLEOTIDE SEQUENCE [LARGE SCALE GENOMIC DNA]</scope>
    <source>
        <strain>ATCC 35678 / DSM 2160 / CIP 103997 / JCM 8858 / NBRC 14720 / NCIMB 2260 / Gabara</strain>
    </source>
</reference>
<dbReference type="EC" id="2.7.1.39" evidence="1"/>
<dbReference type="EMBL" id="CR936257">
    <property type="protein sequence ID" value="CAI50353.1"/>
    <property type="molecule type" value="Genomic_DNA"/>
</dbReference>
<dbReference type="RefSeq" id="WP_011323968.1">
    <property type="nucleotide sequence ID" value="NC_007426.1"/>
</dbReference>
<dbReference type="SMR" id="Q3INF0"/>
<dbReference type="STRING" id="348780.NP_4524A"/>
<dbReference type="EnsemblBacteria" id="CAI50353">
    <property type="protein sequence ID" value="CAI50353"/>
    <property type="gene ID" value="NP_4524A"/>
</dbReference>
<dbReference type="GeneID" id="3703252"/>
<dbReference type="KEGG" id="nph:NP_4524A"/>
<dbReference type="eggNOG" id="arCOG01027">
    <property type="taxonomic scope" value="Archaea"/>
</dbReference>
<dbReference type="HOGENOM" id="CLU_041243_1_1_2"/>
<dbReference type="OrthoDB" id="28273at2157"/>
<dbReference type="UniPathway" id="UPA00050">
    <property type="reaction ID" value="UER00064"/>
</dbReference>
<dbReference type="Proteomes" id="UP000002698">
    <property type="component" value="Chromosome"/>
</dbReference>
<dbReference type="GO" id="GO:0005737">
    <property type="term" value="C:cytoplasm"/>
    <property type="evidence" value="ECO:0007669"/>
    <property type="project" value="UniProtKB-SubCell"/>
</dbReference>
<dbReference type="GO" id="GO:0005524">
    <property type="term" value="F:ATP binding"/>
    <property type="evidence" value="ECO:0007669"/>
    <property type="project" value="UniProtKB-UniRule"/>
</dbReference>
<dbReference type="GO" id="GO:0004413">
    <property type="term" value="F:homoserine kinase activity"/>
    <property type="evidence" value="ECO:0007669"/>
    <property type="project" value="UniProtKB-UniRule"/>
</dbReference>
<dbReference type="GO" id="GO:0009088">
    <property type="term" value="P:threonine biosynthetic process"/>
    <property type="evidence" value="ECO:0007669"/>
    <property type="project" value="UniProtKB-UniRule"/>
</dbReference>
<dbReference type="Gene3D" id="3.30.230.10">
    <property type="match status" value="1"/>
</dbReference>
<dbReference type="Gene3D" id="3.30.70.890">
    <property type="entry name" value="GHMP kinase, C-terminal domain"/>
    <property type="match status" value="1"/>
</dbReference>
<dbReference type="HAMAP" id="MF_00384">
    <property type="entry name" value="Homoser_kinase"/>
    <property type="match status" value="1"/>
</dbReference>
<dbReference type="InterPro" id="IPR013750">
    <property type="entry name" value="GHMP_kinase_C_dom"/>
</dbReference>
<dbReference type="InterPro" id="IPR036554">
    <property type="entry name" value="GHMP_kinase_C_sf"/>
</dbReference>
<dbReference type="InterPro" id="IPR006204">
    <property type="entry name" value="GHMP_kinase_N_dom"/>
</dbReference>
<dbReference type="InterPro" id="IPR000870">
    <property type="entry name" value="Homoserine_kinase"/>
</dbReference>
<dbReference type="InterPro" id="IPR020568">
    <property type="entry name" value="Ribosomal_Su5_D2-typ_SF"/>
</dbReference>
<dbReference type="InterPro" id="IPR014721">
    <property type="entry name" value="Ribsml_uS5_D2-typ_fold_subgr"/>
</dbReference>
<dbReference type="NCBIfam" id="NF002288">
    <property type="entry name" value="PRK01212.1-4"/>
    <property type="match status" value="1"/>
</dbReference>
<dbReference type="NCBIfam" id="TIGR00191">
    <property type="entry name" value="thrB"/>
    <property type="match status" value="1"/>
</dbReference>
<dbReference type="PANTHER" id="PTHR20861:SF1">
    <property type="entry name" value="HOMOSERINE KINASE"/>
    <property type="match status" value="1"/>
</dbReference>
<dbReference type="PANTHER" id="PTHR20861">
    <property type="entry name" value="HOMOSERINE/4-DIPHOSPHOCYTIDYL-2-C-METHYL-D-ERYTHRITOL KINASE"/>
    <property type="match status" value="1"/>
</dbReference>
<dbReference type="Pfam" id="PF08544">
    <property type="entry name" value="GHMP_kinases_C"/>
    <property type="match status" value="1"/>
</dbReference>
<dbReference type="Pfam" id="PF00288">
    <property type="entry name" value="GHMP_kinases_N"/>
    <property type="match status" value="1"/>
</dbReference>
<dbReference type="PIRSF" id="PIRSF000676">
    <property type="entry name" value="Homoser_kin"/>
    <property type="match status" value="1"/>
</dbReference>
<dbReference type="PRINTS" id="PR00958">
    <property type="entry name" value="HOMSERKINASE"/>
</dbReference>
<dbReference type="SUPFAM" id="SSF55060">
    <property type="entry name" value="GHMP Kinase, C-terminal domain"/>
    <property type="match status" value="1"/>
</dbReference>
<dbReference type="SUPFAM" id="SSF54211">
    <property type="entry name" value="Ribosomal protein S5 domain 2-like"/>
    <property type="match status" value="1"/>
</dbReference>
<feature type="chain" id="PRO_1000049153" description="Homoserine kinase">
    <location>
        <begin position="1"/>
        <end position="291"/>
    </location>
</feature>
<feature type="binding site" evidence="1">
    <location>
        <begin position="80"/>
        <end position="90"/>
    </location>
    <ligand>
        <name>ATP</name>
        <dbReference type="ChEBI" id="CHEBI:30616"/>
    </ligand>
</feature>
<accession>Q3INF0</accession>
<protein>
    <recommendedName>
        <fullName evidence="1">Homoserine kinase</fullName>
        <shortName evidence="1">HK</shortName>
        <shortName evidence="1">HSK</shortName>
        <ecNumber evidence="1">2.7.1.39</ecNumber>
    </recommendedName>
</protein>
<name>KHSE_NATPD</name>
<comment type="function">
    <text evidence="1">Catalyzes the ATP-dependent phosphorylation of L-homoserine to L-homoserine phosphate.</text>
</comment>
<comment type="catalytic activity">
    <reaction evidence="1">
        <text>L-homoserine + ATP = O-phospho-L-homoserine + ADP + H(+)</text>
        <dbReference type="Rhea" id="RHEA:13985"/>
        <dbReference type="ChEBI" id="CHEBI:15378"/>
        <dbReference type="ChEBI" id="CHEBI:30616"/>
        <dbReference type="ChEBI" id="CHEBI:57476"/>
        <dbReference type="ChEBI" id="CHEBI:57590"/>
        <dbReference type="ChEBI" id="CHEBI:456216"/>
        <dbReference type="EC" id="2.7.1.39"/>
    </reaction>
</comment>
<comment type="pathway">
    <text evidence="1">Amino-acid biosynthesis; L-threonine biosynthesis; L-threonine from L-aspartate: step 4/5.</text>
</comment>
<comment type="subcellular location">
    <subcellularLocation>
        <location evidence="1">Cytoplasm</location>
    </subcellularLocation>
</comment>
<comment type="similarity">
    <text evidence="1">Belongs to the GHMP kinase family. Homoserine kinase subfamily.</text>
</comment>
<organism>
    <name type="scientific">Natronomonas pharaonis (strain ATCC 35678 / DSM 2160 / CIP 103997 / JCM 8858 / NBRC 14720 / NCIMB 2260 / Gabara)</name>
    <name type="common">Halobacterium pharaonis</name>
    <dbReference type="NCBI Taxonomy" id="348780"/>
    <lineage>
        <taxon>Archaea</taxon>
        <taxon>Methanobacteriati</taxon>
        <taxon>Methanobacteriota</taxon>
        <taxon>Stenosarchaea group</taxon>
        <taxon>Halobacteria</taxon>
        <taxon>Halobacteriales</taxon>
        <taxon>Haloarculaceae</taxon>
        <taxon>Natronomonas</taxon>
    </lineage>
</organism>
<sequence>MITVRAPATSANLGSGFDVFGAALERPADILRIEKANRTTIRVTGVGSKYIPEDPEKNTVGAVAEALDAPAHIEIDKGVRPASGLGSSAASAAAAAVGLNELYDRGLSREELVPIAAEGEAVVSGAAHADNVAPSIMGGFTVAREDGVTQVDASIPLVACLPEIVVSTRDARGVVPEAAPMEAVVDVVGNAATLAVGMARDDPALVGRGMEDSIVTPERAELINGYETVRSAAENAGATGVTISGAGPTVIAACHRGDRTAIASAMLDAFSEAGVEARAYKTEIGRGAELF</sequence>
<gene>
    <name evidence="1" type="primary">thrB</name>
    <name type="ordered locus">NP_4524A</name>
</gene>
<proteinExistence type="inferred from homology"/>